<gene>
    <name type="primary">gntP</name>
    <name type="synonym">yjiB</name>
    <name type="ordered locus">b4321</name>
    <name type="ordered locus">JW4284</name>
</gene>
<feature type="chain" id="PRO_0000061932" description="High-affinity gluconate transporter">
    <location>
        <begin position="1"/>
        <end position="447"/>
    </location>
</feature>
<feature type="transmembrane region" description="Helical" evidence="1">
    <location>
        <begin position="1"/>
        <end position="21"/>
    </location>
</feature>
<feature type="topological domain" description="Periplasmic" evidence="1">
    <location>
        <begin position="22"/>
        <end position="28"/>
    </location>
</feature>
<feature type="transmembrane region" description="Helical" evidence="1">
    <location>
        <begin position="29"/>
        <end position="49"/>
    </location>
</feature>
<feature type="topological domain" description="Cytoplasmic" evidence="1">
    <location>
        <begin position="50"/>
        <end position="54"/>
    </location>
</feature>
<feature type="transmembrane region" description="Helical" evidence="1">
    <location>
        <begin position="55"/>
        <end position="75"/>
    </location>
</feature>
<feature type="topological domain" description="Periplasmic" evidence="1">
    <location>
        <begin position="76"/>
        <end position="103"/>
    </location>
</feature>
<feature type="transmembrane region" description="Helical" evidence="1">
    <location>
        <begin position="104"/>
        <end position="124"/>
    </location>
</feature>
<feature type="topological domain" description="Cytoplasmic" evidence="1">
    <location>
        <begin position="125"/>
        <end position="126"/>
    </location>
</feature>
<feature type="transmembrane region" description="Helical" evidence="1">
    <location>
        <begin position="127"/>
        <end position="147"/>
    </location>
</feature>
<feature type="topological domain" description="Periplasmic" evidence="1">
    <location>
        <begin position="148"/>
        <end position="175"/>
    </location>
</feature>
<feature type="transmembrane region" description="Helical" evidence="1">
    <location>
        <begin position="176"/>
        <end position="196"/>
    </location>
</feature>
<feature type="topological domain" description="Cytoplasmic" evidence="1">
    <location>
        <begin position="197"/>
        <end position="224"/>
    </location>
</feature>
<feature type="transmembrane region" description="Helical" evidence="1">
    <location>
        <begin position="225"/>
        <end position="245"/>
    </location>
</feature>
<feature type="topological domain" description="Periplasmic" evidence="1">
    <location>
        <begin position="246"/>
        <end position="260"/>
    </location>
</feature>
<feature type="transmembrane region" description="Helical" evidence="1">
    <location>
        <begin position="261"/>
        <end position="281"/>
    </location>
</feature>
<feature type="topological domain" description="Cytoplasmic" evidence="1">
    <location>
        <begin position="282"/>
        <end position="294"/>
    </location>
</feature>
<feature type="transmembrane region" description="Helical" evidence="1">
    <location>
        <begin position="295"/>
        <end position="315"/>
    </location>
</feature>
<feature type="topological domain" description="Periplasmic" evidence="1">
    <location>
        <begin position="316"/>
        <end position="329"/>
    </location>
</feature>
<feature type="transmembrane region" description="Helical" evidence="1">
    <location>
        <begin position="330"/>
        <end position="350"/>
    </location>
</feature>
<feature type="topological domain" description="Cytoplasmic" evidence="1">
    <location>
        <position position="351"/>
    </location>
</feature>
<feature type="transmembrane region" description="Helical" evidence="1">
    <location>
        <begin position="352"/>
        <end position="372"/>
    </location>
</feature>
<feature type="topological domain" description="Periplasmic" evidence="1">
    <location>
        <begin position="373"/>
        <end position="374"/>
    </location>
</feature>
<feature type="transmembrane region" description="Helical" evidence="1">
    <location>
        <begin position="375"/>
        <end position="395"/>
    </location>
</feature>
<feature type="topological domain" description="Cytoplasmic" evidence="1">
    <location>
        <begin position="396"/>
        <end position="426"/>
    </location>
</feature>
<feature type="transmembrane region" description="Helical" evidence="1">
    <location>
        <begin position="427"/>
        <end position="447"/>
    </location>
</feature>
<feature type="sequence conflict" description="In Ref. 1; CAA62859." evidence="2" ref="1">
    <original>E</original>
    <variation>A</variation>
    <location>
        <position position="63"/>
    </location>
</feature>
<evidence type="ECO:0000255" key="1"/>
<evidence type="ECO:0000305" key="2"/>
<dbReference type="EMBL" id="X91735">
    <property type="protein sequence ID" value="CAA62859.1"/>
    <property type="molecule type" value="Genomic_DNA"/>
</dbReference>
<dbReference type="EMBL" id="U14003">
    <property type="protein sequence ID" value="AAA97217.1"/>
    <property type="molecule type" value="Genomic_DNA"/>
</dbReference>
<dbReference type="EMBL" id="U00096">
    <property type="protein sequence ID" value="AAC77277.1"/>
    <property type="molecule type" value="Genomic_DNA"/>
</dbReference>
<dbReference type="EMBL" id="AP009048">
    <property type="protein sequence ID" value="BAE78314.1"/>
    <property type="molecule type" value="Genomic_DNA"/>
</dbReference>
<dbReference type="PIR" id="S56546">
    <property type="entry name" value="S56546"/>
</dbReference>
<dbReference type="RefSeq" id="NP_418741.1">
    <property type="nucleotide sequence ID" value="NC_000913.3"/>
</dbReference>
<dbReference type="RefSeq" id="WP_000558251.1">
    <property type="nucleotide sequence ID" value="NZ_SSZK01000015.1"/>
</dbReference>
<dbReference type="SMR" id="P0AC94"/>
<dbReference type="BioGRID" id="4261000">
    <property type="interactions" value="6"/>
</dbReference>
<dbReference type="FunCoup" id="P0AC94">
    <property type="interactions" value="358"/>
</dbReference>
<dbReference type="STRING" id="511145.b4321"/>
<dbReference type="REBASE" id="952220">
    <property type="entry name" value="M.EcoKORF4321P"/>
</dbReference>
<dbReference type="TCDB" id="2.A.8.1.3">
    <property type="family name" value="the gluconate:h(+) symporter (gntp) family"/>
</dbReference>
<dbReference type="PaxDb" id="511145-b4321"/>
<dbReference type="DNASU" id="948848"/>
<dbReference type="EnsemblBacteria" id="AAC77277">
    <property type="protein sequence ID" value="AAC77277"/>
    <property type="gene ID" value="b4321"/>
</dbReference>
<dbReference type="GeneID" id="948848"/>
<dbReference type="KEGG" id="ecj:JW4284"/>
<dbReference type="KEGG" id="eco:b4321"/>
<dbReference type="KEGG" id="ecoc:C3026_23340"/>
<dbReference type="PATRIC" id="fig|1411691.4.peg.2371"/>
<dbReference type="EchoBASE" id="EB2451"/>
<dbReference type="eggNOG" id="COG2610">
    <property type="taxonomic scope" value="Bacteria"/>
</dbReference>
<dbReference type="HOGENOM" id="CLU_027949_0_0_6"/>
<dbReference type="InParanoid" id="P0AC94"/>
<dbReference type="OMA" id="ANHAGFW"/>
<dbReference type="OrthoDB" id="9787129at2"/>
<dbReference type="PhylomeDB" id="P0AC94"/>
<dbReference type="BioCyc" id="EcoCyc:GNTP-MONOMER"/>
<dbReference type="BioCyc" id="MetaCyc:GNTP-MONOMER"/>
<dbReference type="UniPathway" id="UPA00792"/>
<dbReference type="PRO" id="PR:P0AC94"/>
<dbReference type="Proteomes" id="UP000000625">
    <property type="component" value="Chromosome"/>
</dbReference>
<dbReference type="GO" id="GO:0016020">
    <property type="term" value="C:membrane"/>
    <property type="evidence" value="ECO:0000314"/>
    <property type="project" value="EcoCyc"/>
</dbReference>
<dbReference type="GO" id="GO:0005886">
    <property type="term" value="C:plasma membrane"/>
    <property type="evidence" value="ECO:0000314"/>
    <property type="project" value="EcoCyc"/>
</dbReference>
<dbReference type="GO" id="GO:0005351">
    <property type="term" value="F:carbohydrate:proton symporter activity"/>
    <property type="evidence" value="ECO:0000315"/>
    <property type="project" value="EcoCyc"/>
</dbReference>
<dbReference type="GO" id="GO:0015128">
    <property type="term" value="F:gluconate transmembrane transporter activity"/>
    <property type="evidence" value="ECO:0000314"/>
    <property type="project" value="EcoCyc"/>
</dbReference>
<dbReference type="GO" id="GO:0019521">
    <property type="term" value="P:D-gluconate metabolic process"/>
    <property type="evidence" value="ECO:0007669"/>
    <property type="project" value="UniProtKB-KW"/>
</dbReference>
<dbReference type="GO" id="GO:0035429">
    <property type="term" value="P:gluconate transmembrane transport"/>
    <property type="evidence" value="ECO:0000314"/>
    <property type="project" value="EcoCyc"/>
</dbReference>
<dbReference type="InterPro" id="IPR003474">
    <property type="entry name" value="Glcn_transporter"/>
</dbReference>
<dbReference type="NCBIfam" id="TIGR00791">
    <property type="entry name" value="gntP"/>
    <property type="match status" value="1"/>
</dbReference>
<dbReference type="NCBIfam" id="NF007459">
    <property type="entry name" value="PRK10034.1"/>
    <property type="match status" value="1"/>
</dbReference>
<dbReference type="PANTHER" id="PTHR30354">
    <property type="entry name" value="GNT FAMILY GLUCONATE TRANSPORTER"/>
    <property type="match status" value="1"/>
</dbReference>
<dbReference type="PANTHER" id="PTHR30354:SF20">
    <property type="entry name" value="HIGH-AFFINITY GLUCONATE TRANSPORTER"/>
    <property type="match status" value="1"/>
</dbReference>
<dbReference type="Pfam" id="PF02447">
    <property type="entry name" value="GntP_permease"/>
    <property type="match status" value="1"/>
</dbReference>
<dbReference type="PIRSF" id="PIRSF002746">
    <property type="entry name" value="Gluconate_transporter"/>
    <property type="match status" value="1"/>
</dbReference>
<protein>
    <recommendedName>
        <fullName>High-affinity gluconate transporter</fullName>
    </recommendedName>
    <alternativeName>
        <fullName>Gluconate permease 3</fullName>
    </alternativeName>
    <alternativeName>
        <fullName>Gnt-III system</fullName>
    </alternativeName>
</protein>
<sequence length="447" mass="47138">MHVLNILWVVFGIGLMLVLNLKFKINSMVALLVAALSVGMLAGMDLMSLLHTMKAGFGNTLGELAIIVVFGAVIGKLMVDSGAAHQIAHTLLARLGLRYVQLSVIIIGLIFGLAMFYEVAFIMLAPLVIVIAAEAKIPFLKLAIPAVAAATTAHSLFPPQPGPVALVNAYGADMGMVYIYGVLVTIPSVICAGLILPKFLGNLERPTPSFLKADQPVDMNNLPSFGVSILVPLIPAIIMISTTIANIWLVKDTPAWEVVNFIGSSPIAMFIAMVVAFVLFGTARGHDMQWVMNAFESAVKSIAMVILIIGAGGVLKQTIIDTGIGDTIGMLMSHGNISPYIMAWLITVLIRLATGQGVVSAMTAAGIISAAILDPATGQLVGVNPALLVLATAAGSNTLTHINDASFWLFKGYFDLSVKDTLKTWGLLELVNSVVGLIIVLIISMVA</sequence>
<name>GNTP_ECOLI</name>
<reference key="1">
    <citation type="journal article" date="1996" name="J. Bacteriol.">
        <title>The gntP gene of Escherichia coli involved in gluconate uptake.</title>
        <authorList>
            <person name="Klemm P."/>
            <person name="Tong S."/>
            <person name="Nielsen H."/>
            <person name="Conway T."/>
        </authorList>
    </citation>
    <scope>NUCLEOTIDE SEQUENCE [GENOMIC DNA]</scope>
    <source>
        <strain>K12</strain>
    </source>
</reference>
<reference key="2">
    <citation type="journal article" date="1995" name="Nucleic Acids Res.">
        <title>Analysis of the Escherichia coli genome VI: DNA sequence of the region from 92.8 through 100 minutes.</title>
        <authorList>
            <person name="Burland V.D."/>
            <person name="Plunkett G. III"/>
            <person name="Sofia H.J."/>
            <person name="Daniels D.L."/>
            <person name="Blattner F.R."/>
        </authorList>
    </citation>
    <scope>NUCLEOTIDE SEQUENCE [LARGE SCALE GENOMIC DNA]</scope>
    <source>
        <strain>K12 / MG1655 / ATCC 47076</strain>
    </source>
</reference>
<reference key="3">
    <citation type="journal article" date="1997" name="Science">
        <title>The complete genome sequence of Escherichia coli K-12.</title>
        <authorList>
            <person name="Blattner F.R."/>
            <person name="Plunkett G. III"/>
            <person name="Bloch C.A."/>
            <person name="Perna N.T."/>
            <person name="Burland V."/>
            <person name="Riley M."/>
            <person name="Collado-Vides J."/>
            <person name="Glasner J.D."/>
            <person name="Rode C.K."/>
            <person name="Mayhew G.F."/>
            <person name="Gregor J."/>
            <person name="Davis N.W."/>
            <person name="Kirkpatrick H.A."/>
            <person name="Goeden M.A."/>
            <person name="Rose D.J."/>
            <person name="Mau B."/>
            <person name="Shao Y."/>
        </authorList>
    </citation>
    <scope>NUCLEOTIDE SEQUENCE [LARGE SCALE GENOMIC DNA]</scope>
    <source>
        <strain>K12 / MG1655 / ATCC 47076</strain>
    </source>
</reference>
<reference key="4">
    <citation type="journal article" date="2006" name="Mol. Syst. Biol.">
        <title>Highly accurate genome sequences of Escherichia coli K-12 strains MG1655 and W3110.</title>
        <authorList>
            <person name="Hayashi K."/>
            <person name="Morooka N."/>
            <person name="Yamamoto Y."/>
            <person name="Fujita K."/>
            <person name="Isono K."/>
            <person name="Choi S."/>
            <person name="Ohtsubo E."/>
            <person name="Baba T."/>
            <person name="Wanner B.L."/>
            <person name="Mori H."/>
            <person name="Horiuchi T."/>
        </authorList>
    </citation>
    <scope>NUCLEOTIDE SEQUENCE [LARGE SCALE GENOMIC DNA]</scope>
    <source>
        <strain>K12 / W3110 / ATCC 27325 / DSM 5911</strain>
    </source>
</reference>
<reference key="5">
    <citation type="journal article" date="2005" name="Science">
        <title>Global topology analysis of the Escherichia coli inner membrane proteome.</title>
        <authorList>
            <person name="Daley D.O."/>
            <person name="Rapp M."/>
            <person name="Granseth E."/>
            <person name="Melen K."/>
            <person name="Drew D."/>
            <person name="von Heijne G."/>
        </authorList>
    </citation>
    <scope>TOPOLOGY [LARGE SCALE ANALYSIS]</scope>
    <source>
        <strain>K12 / MG1655 / ATCC 47076</strain>
    </source>
</reference>
<keyword id="KW-0997">Cell inner membrane</keyword>
<keyword id="KW-1003">Cell membrane</keyword>
<keyword id="KW-0311">Gluconate utilization</keyword>
<keyword id="KW-0472">Membrane</keyword>
<keyword id="KW-1185">Reference proteome</keyword>
<keyword id="KW-0762">Sugar transport</keyword>
<keyword id="KW-0812">Transmembrane</keyword>
<keyword id="KW-1133">Transmembrane helix</keyword>
<keyword id="KW-0813">Transport</keyword>
<comment type="function">
    <text>High-affinity gluconate transporter with fairly broad specificity, including low affinity for glucuronate, several disaccharides, and some hexoses, but not glucose.</text>
</comment>
<comment type="pathway">
    <text>Carbohydrate acid metabolism; D-gluconate degradation.</text>
</comment>
<comment type="subcellular location">
    <subcellularLocation>
        <location>Cell inner membrane</location>
        <topology>Multi-pass membrane protein</topology>
    </subcellularLocation>
</comment>
<comment type="similarity">
    <text evidence="2">Belongs to the GntP permease family.</text>
</comment>
<accession>P0AC94</accession>
<accession>P39373</accession>
<accession>Q2M5Z2</accession>
<proteinExistence type="evidence at protein level"/>
<organism>
    <name type="scientific">Escherichia coli (strain K12)</name>
    <dbReference type="NCBI Taxonomy" id="83333"/>
    <lineage>
        <taxon>Bacteria</taxon>
        <taxon>Pseudomonadati</taxon>
        <taxon>Pseudomonadota</taxon>
        <taxon>Gammaproteobacteria</taxon>
        <taxon>Enterobacterales</taxon>
        <taxon>Enterobacteriaceae</taxon>
        <taxon>Escherichia</taxon>
    </lineage>
</organism>